<comment type="function">
    <text evidence="2">Cell wall formation.</text>
</comment>
<comment type="catalytic activity">
    <reaction evidence="2">
        <text>2 D-alanine + ATP = D-alanyl-D-alanine + ADP + phosphate + H(+)</text>
        <dbReference type="Rhea" id="RHEA:11224"/>
        <dbReference type="ChEBI" id="CHEBI:15378"/>
        <dbReference type="ChEBI" id="CHEBI:30616"/>
        <dbReference type="ChEBI" id="CHEBI:43474"/>
        <dbReference type="ChEBI" id="CHEBI:57416"/>
        <dbReference type="ChEBI" id="CHEBI:57822"/>
        <dbReference type="ChEBI" id="CHEBI:456216"/>
        <dbReference type="EC" id="6.3.2.4"/>
    </reaction>
</comment>
<comment type="cofactor">
    <cofactor evidence="1">
        <name>Mg(2+)</name>
        <dbReference type="ChEBI" id="CHEBI:18420"/>
    </cofactor>
    <cofactor evidence="1">
        <name>Mn(2+)</name>
        <dbReference type="ChEBI" id="CHEBI:29035"/>
    </cofactor>
    <text evidence="1">Binds 2 magnesium or manganese ions per subunit.</text>
</comment>
<comment type="pathway">
    <text evidence="2">Cell wall biogenesis; peptidoglycan biosynthesis.</text>
</comment>
<comment type="subcellular location">
    <subcellularLocation>
        <location evidence="2">Cytoplasm</location>
    </subcellularLocation>
</comment>
<comment type="similarity">
    <text evidence="2">Belongs to the D-alanine--D-alanine ligase family.</text>
</comment>
<evidence type="ECO:0000250" key="1"/>
<evidence type="ECO:0000255" key="2">
    <source>
        <dbReference type="HAMAP-Rule" id="MF_00047"/>
    </source>
</evidence>
<gene>
    <name evidence="2" type="primary">ddl</name>
    <name type="ordered locus">RHA1_ro06507</name>
</gene>
<organism>
    <name type="scientific">Rhodococcus jostii (strain RHA1)</name>
    <dbReference type="NCBI Taxonomy" id="101510"/>
    <lineage>
        <taxon>Bacteria</taxon>
        <taxon>Bacillati</taxon>
        <taxon>Actinomycetota</taxon>
        <taxon>Actinomycetes</taxon>
        <taxon>Mycobacteriales</taxon>
        <taxon>Nocardiaceae</taxon>
        <taxon>Rhodococcus</taxon>
    </lineage>
</organism>
<accession>Q0S2F6</accession>
<reference key="1">
    <citation type="journal article" date="2006" name="Proc. Natl. Acad. Sci. U.S.A.">
        <title>The complete genome of Rhodococcus sp. RHA1 provides insights into a catabolic powerhouse.</title>
        <authorList>
            <person name="McLeod M.P."/>
            <person name="Warren R.L."/>
            <person name="Hsiao W.W.L."/>
            <person name="Araki N."/>
            <person name="Myhre M."/>
            <person name="Fernandes C."/>
            <person name="Miyazawa D."/>
            <person name="Wong W."/>
            <person name="Lillquist A.L."/>
            <person name="Wang D."/>
            <person name="Dosanjh M."/>
            <person name="Hara H."/>
            <person name="Petrescu A."/>
            <person name="Morin R.D."/>
            <person name="Yang G."/>
            <person name="Stott J.M."/>
            <person name="Schein J.E."/>
            <person name="Shin H."/>
            <person name="Smailus D."/>
            <person name="Siddiqui A.S."/>
            <person name="Marra M.A."/>
            <person name="Jones S.J.M."/>
            <person name="Holt R."/>
            <person name="Brinkman F.S.L."/>
            <person name="Miyauchi K."/>
            <person name="Fukuda M."/>
            <person name="Davies J.E."/>
            <person name="Mohn W.W."/>
            <person name="Eltis L.D."/>
        </authorList>
    </citation>
    <scope>NUCLEOTIDE SEQUENCE [LARGE SCALE GENOMIC DNA]</scope>
    <source>
        <strain>RHA1</strain>
    </source>
</reference>
<proteinExistence type="inferred from homology"/>
<name>DDL_RHOJR</name>
<sequence length="368" mass="38959">MSKPRTRVAVIFGGRSNEHSVSCVSAGSVLRNLDPERYEVVPIGITTEGSWVLGSTDPETLSIRGRALPSVDADGSALALTADPTRSGDLVALDDGEAGKILASVDVVFPVLHGAYGEDGTIQGLLELAGVPYVGPGVLASAAGMDKEFTKKLLAAEGLPIGFQVVLRPGTATLTDEQKSRLHLPVFVKPARGGSSIGITRVAEWAALDDAIAHARLHDPKVIVESGIIGREVECGVLEFPDGDVRASVIAEIRMPEGAGDDEAFYDFDSKYLDDVCEFDVPAKLDESVSDEIRELAVRAFSALDCQGLARVDFFVTEDGPVINEINTMPGFTSISMYPRMWGAVGVDYGTLVSTLVDTALARGIGLR</sequence>
<protein>
    <recommendedName>
        <fullName evidence="2">D-alanine--D-alanine ligase</fullName>
        <ecNumber evidence="2">6.3.2.4</ecNumber>
    </recommendedName>
    <alternativeName>
        <fullName evidence="2">D-Ala-D-Ala ligase</fullName>
    </alternativeName>
    <alternativeName>
        <fullName evidence="2">D-alanylalanine synthetase</fullName>
    </alternativeName>
</protein>
<feature type="chain" id="PRO_0000341164" description="D-alanine--D-alanine ligase">
    <location>
        <begin position="1"/>
        <end position="368"/>
    </location>
</feature>
<feature type="domain" description="ATP-grasp" evidence="2">
    <location>
        <begin position="151"/>
        <end position="358"/>
    </location>
</feature>
<feature type="binding site" evidence="2">
    <location>
        <begin position="179"/>
        <end position="234"/>
    </location>
    <ligand>
        <name>ATP</name>
        <dbReference type="ChEBI" id="CHEBI:30616"/>
    </ligand>
</feature>
<feature type="binding site" evidence="2">
    <location>
        <position position="313"/>
    </location>
    <ligand>
        <name>Mg(2+)</name>
        <dbReference type="ChEBI" id="CHEBI:18420"/>
        <label>1</label>
    </ligand>
</feature>
<feature type="binding site" evidence="2">
    <location>
        <position position="325"/>
    </location>
    <ligand>
        <name>Mg(2+)</name>
        <dbReference type="ChEBI" id="CHEBI:18420"/>
        <label>1</label>
    </ligand>
</feature>
<feature type="binding site" evidence="2">
    <location>
        <position position="325"/>
    </location>
    <ligand>
        <name>Mg(2+)</name>
        <dbReference type="ChEBI" id="CHEBI:18420"/>
        <label>2</label>
    </ligand>
</feature>
<feature type="binding site" evidence="2">
    <location>
        <position position="327"/>
    </location>
    <ligand>
        <name>Mg(2+)</name>
        <dbReference type="ChEBI" id="CHEBI:18420"/>
        <label>2</label>
    </ligand>
</feature>
<keyword id="KW-0067">ATP-binding</keyword>
<keyword id="KW-0133">Cell shape</keyword>
<keyword id="KW-0961">Cell wall biogenesis/degradation</keyword>
<keyword id="KW-0963">Cytoplasm</keyword>
<keyword id="KW-0436">Ligase</keyword>
<keyword id="KW-0460">Magnesium</keyword>
<keyword id="KW-0464">Manganese</keyword>
<keyword id="KW-0479">Metal-binding</keyword>
<keyword id="KW-0547">Nucleotide-binding</keyword>
<keyword id="KW-0573">Peptidoglycan synthesis</keyword>
<dbReference type="EC" id="6.3.2.4" evidence="2"/>
<dbReference type="EMBL" id="CP000431">
    <property type="protein sequence ID" value="ABG98280.1"/>
    <property type="molecule type" value="Genomic_DNA"/>
</dbReference>
<dbReference type="RefSeq" id="WP_009479693.1">
    <property type="nucleotide sequence ID" value="NC_008268.1"/>
</dbReference>
<dbReference type="SMR" id="Q0S2F6"/>
<dbReference type="KEGG" id="rha:RHA1_ro06507"/>
<dbReference type="eggNOG" id="COG1181">
    <property type="taxonomic scope" value="Bacteria"/>
</dbReference>
<dbReference type="HOGENOM" id="CLU_039268_0_1_11"/>
<dbReference type="OrthoDB" id="9813261at2"/>
<dbReference type="UniPathway" id="UPA00219"/>
<dbReference type="Proteomes" id="UP000008710">
    <property type="component" value="Chromosome"/>
</dbReference>
<dbReference type="GO" id="GO:0005829">
    <property type="term" value="C:cytosol"/>
    <property type="evidence" value="ECO:0007669"/>
    <property type="project" value="TreeGrafter"/>
</dbReference>
<dbReference type="GO" id="GO:0005524">
    <property type="term" value="F:ATP binding"/>
    <property type="evidence" value="ECO:0007669"/>
    <property type="project" value="UniProtKB-KW"/>
</dbReference>
<dbReference type="GO" id="GO:0008716">
    <property type="term" value="F:D-alanine-D-alanine ligase activity"/>
    <property type="evidence" value="ECO:0007669"/>
    <property type="project" value="UniProtKB-UniRule"/>
</dbReference>
<dbReference type="GO" id="GO:0046872">
    <property type="term" value="F:metal ion binding"/>
    <property type="evidence" value="ECO:0007669"/>
    <property type="project" value="UniProtKB-KW"/>
</dbReference>
<dbReference type="GO" id="GO:0071555">
    <property type="term" value="P:cell wall organization"/>
    <property type="evidence" value="ECO:0007669"/>
    <property type="project" value="UniProtKB-KW"/>
</dbReference>
<dbReference type="GO" id="GO:0009252">
    <property type="term" value="P:peptidoglycan biosynthetic process"/>
    <property type="evidence" value="ECO:0007669"/>
    <property type="project" value="UniProtKB-UniRule"/>
</dbReference>
<dbReference type="GO" id="GO:0008360">
    <property type="term" value="P:regulation of cell shape"/>
    <property type="evidence" value="ECO:0007669"/>
    <property type="project" value="UniProtKB-KW"/>
</dbReference>
<dbReference type="FunFam" id="3.30.470.20:FF:000008">
    <property type="entry name" value="D-alanine--D-alanine ligase"/>
    <property type="match status" value="1"/>
</dbReference>
<dbReference type="Gene3D" id="3.40.50.20">
    <property type="match status" value="1"/>
</dbReference>
<dbReference type="Gene3D" id="3.30.1490.20">
    <property type="entry name" value="ATP-grasp fold, A domain"/>
    <property type="match status" value="1"/>
</dbReference>
<dbReference type="Gene3D" id="3.30.470.20">
    <property type="entry name" value="ATP-grasp fold, B domain"/>
    <property type="match status" value="1"/>
</dbReference>
<dbReference type="HAMAP" id="MF_00047">
    <property type="entry name" value="Dala_Dala_lig"/>
    <property type="match status" value="1"/>
</dbReference>
<dbReference type="InterPro" id="IPR011761">
    <property type="entry name" value="ATP-grasp"/>
</dbReference>
<dbReference type="InterPro" id="IPR013815">
    <property type="entry name" value="ATP_grasp_subdomain_1"/>
</dbReference>
<dbReference type="InterPro" id="IPR000291">
    <property type="entry name" value="D-Ala_lig_Van_CS"/>
</dbReference>
<dbReference type="InterPro" id="IPR005905">
    <property type="entry name" value="D_ala_D_ala"/>
</dbReference>
<dbReference type="InterPro" id="IPR011095">
    <property type="entry name" value="Dala_Dala_lig_C"/>
</dbReference>
<dbReference type="InterPro" id="IPR011127">
    <property type="entry name" value="Dala_Dala_lig_N"/>
</dbReference>
<dbReference type="InterPro" id="IPR016185">
    <property type="entry name" value="PreATP-grasp_dom_sf"/>
</dbReference>
<dbReference type="NCBIfam" id="TIGR01205">
    <property type="entry name" value="D_ala_D_alaTIGR"/>
    <property type="match status" value="1"/>
</dbReference>
<dbReference type="NCBIfam" id="NF002528">
    <property type="entry name" value="PRK01966.1-4"/>
    <property type="match status" value="1"/>
</dbReference>
<dbReference type="PANTHER" id="PTHR23132">
    <property type="entry name" value="D-ALANINE--D-ALANINE LIGASE"/>
    <property type="match status" value="1"/>
</dbReference>
<dbReference type="PANTHER" id="PTHR23132:SF25">
    <property type="entry name" value="D-ALANINE--D-ALANINE LIGASE A"/>
    <property type="match status" value="1"/>
</dbReference>
<dbReference type="Pfam" id="PF07478">
    <property type="entry name" value="Dala_Dala_lig_C"/>
    <property type="match status" value="1"/>
</dbReference>
<dbReference type="Pfam" id="PF01820">
    <property type="entry name" value="Dala_Dala_lig_N"/>
    <property type="match status" value="1"/>
</dbReference>
<dbReference type="PIRSF" id="PIRSF039102">
    <property type="entry name" value="Ddl/VanB"/>
    <property type="match status" value="1"/>
</dbReference>
<dbReference type="SUPFAM" id="SSF56059">
    <property type="entry name" value="Glutathione synthetase ATP-binding domain-like"/>
    <property type="match status" value="1"/>
</dbReference>
<dbReference type="SUPFAM" id="SSF52440">
    <property type="entry name" value="PreATP-grasp domain"/>
    <property type="match status" value="1"/>
</dbReference>
<dbReference type="PROSITE" id="PS50975">
    <property type="entry name" value="ATP_GRASP"/>
    <property type="match status" value="1"/>
</dbReference>
<dbReference type="PROSITE" id="PS00843">
    <property type="entry name" value="DALA_DALA_LIGASE_1"/>
    <property type="match status" value="1"/>
</dbReference>
<dbReference type="PROSITE" id="PS00844">
    <property type="entry name" value="DALA_DALA_LIGASE_2"/>
    <property type="match status" value="1"/>
</dbReference>